<accession>C1DE68</accession>
<gene>
    <name evidence="1" type="primary">iscS</name>
    <name type="ordered locus">Avin_40400</name>
</gene>
<feature type="chain" id="PRO_1000205168" description="Cysteine desulfurase IscS">
    <location>
        <begin position="1"/>
        <end position="404"/>
    </location>
</feature>
<feature type="active site" description="Cysteine persulfide intermediate" evidence="1">
    <location>
        <position position="328"/>
    </location>
</feature>
<feature type="binding site" evidence="1">
    <location>
        <begin position="75"/>
        <end position="76"/>
    </location>
    <ligand>
        <name>pyridoxal 5'-phosphate</name>
        <dbReference type="ChEBI" id="CHEBI:597326"/>
    </ligand>
</feature>
<feature type="binding site" evidence="1">
    <location>
        <position position="155"/>
    </location>
    <ligand>
        <name>pyridoxal 5'-phosphate</name>
        <dbReference type="ChEBI" id="CHEBI:597326"/>
    </ligand>
</feature>
<feature type="binding site" evidence="1">
    <location>
        <position position="183"/>
    </location>
    <ligand>
        <name>pyridoxal 5'-phosphate</name>
        <dbReference type="ChEBI" id="CHEBI:597326"/>
    </ligand>
</feature>
<feature type="binding site" evidence="1">
    <location>
        <begin position="203"/>
        <end position="205"/>
    </location>
    <ligand>
        <name>pyridoxal 5'-phosphate</name>
        <dbReference type="ChEBI" id="CHEBI:597326"/>
    </ligand>
</feature>
<feature type="binding site" evidence="1">
    <location>
        <position position="243"/>
    </location>
    <ligand>
        <name>pyridoxal 5'-phosphate</name>
        <dbReference type="ChEBI" id="CHEBI:597326"/>
    </ligand>
</feature>
<feature type="binding site" description="via persulfide group" evidence="1">
    <location>
        <position position="328"/>
    </location>
    <ligand>
        <name>[2Fe-2S] cluster</name>
        <dbReference type="ChEBI" id="CHEBI:190135"/>
        <note>ligand shared with IscU</note>
    </ligand>
</feature>
<feature type="modified residue" description="N6-(pyridoxal phosphate)lysine" evidence="1">
    <location>
        <position position="206"/>
    </location>
</feature>
<sequence>MKLPIYLDYSATTPVDPRVAQKMCECLTMEGNFGNPASRSHVFGWKAEEAVENARRQVAELVNADPREIVWTSGATESDNLAIKGVAHFYASKGKHIITSKIEHKAVLDTTRQLEREGFEVTYLEPGEDGLITPAMVAAALREDTILVSVMHVNNEIGTVNDIAAIGELTRSRGVLYHVDAAQSTGKVAIDLERMKVDLMSFSAHKTYGPKGIGALYVRRKPRVRLEAQMHGGGHERGMRSGTLATHQIVGMGEAFRIAREEMAAESRRIAGLSHRFHEQVSTLEEVYLNGSATARVPHNLNLSFNYVEGESLIMSLRDLAVSSGSACTSASLEPSYVLRALGRNDELAHSSIRFTFGRFTTEEEVDYAARKVCEAVGKLRELSPLWDMYKDGVDLSKIEWQAH</sequence>
<comment type="function">
    <text evidence="1">Master enzyme that delivers sulfur to a number of partners involved in Fe-S cluster assembly, tRNA modification or cofactor biosynthesis. Catalyzes the removal of elemental sulfur atoms from cysteine to produce alanine. Functions as a sulfur delivery protein for Fe-S cluster synthesis onto IscU, an Fe-S scaffold assembly protein, as well as other S acceptor proteins.</text>
</comment>
<comment type="catalytic activity">
    <reaction evidence="1">
        <text>(sulfur carrier)-H + L-cysteine = (sulfur carrier)-SH + L-alanine</text>
        <dbReference type="Rhea" id="RHEA:43892"/>
        <dbReference type="Rhea" id="RHEA-COMP:14737"/>
        <dbReference type="Rhea" id="RHEA-COMP:14739"/>
        <dbReference type="ChEBI" id="CHEBI:29917"/>
        <dbReference type="ChEBI" id="CHEBI:35235"/>
        <dbReference type="ChEBI" id="CHEBI:57972"/>
        <dbReference type="ChEBI" id="CHEBI:64428"/>
        <dbReference type="EC" id="2.8.1.7"/>
    </reaction>
</comment>
<comment type="cofactor">
    <cofactor evidence="1">
        <name>pyridoxal 5'-phosphate</name>
        <dbReference type="ChEBI" id="CHEBI:597326"/>
    </cofactor>
</comment>
<comment type="pathway">
    <text evidence="1">Cofactor biosynthesis; iron-sulfur cluster biosynthesis.</text>
</comment>
<comment type="subunit">
    <text evidence="1">Homodimer. Forms a heterotetramer with IscU, interacts with other sulfur acceptors.</text>
</comment>
<comment type="subcellular location">
    <subcellularLocation>
        <location evidence="1">Cytoplasm</location>
    </subcellularLocation>
</comment>
<comment type="similarity">
    <text evidence="1">Belongs to the class-V pyridoxal-phosphate-dependent aminotransferase family. NifS/IscS subfamily.</text>
</comment>
<organism>
    <name type="scientific">Azotobacter vinelandii (strain DJ / ATCC BAA-1303)</name>
    <dbReference type="NCBI Taxonomy" id="322710"/>
    <lineage>
        <taxon>Bacteria</taxon>
        <taxon>Pseudomonadati</taxon>
        <taxon>Pseudomonadota</taxon>
        <taxon>Gammaproteobacteria</taxon>
        <taxon>Pseudomonadales</taxon>
        <taxon>Pseudomonadaceae</taxon>
        <taxon>Azotobacter</taxon>
    </lineage>
</organism>
<proteinExistence type="inferred from homology"/>
<protein>
    <recommendedName>
        <fullName evidence="1">Cysteine desulfurase IscS</fullName>
        <ecNumber evidence="1">2.8.1.7</ecNumber>
    </recommendedName>
</protein>
<name>ISCS_AZOVD</name>
<keyword id="KW-0001">2Fe-2S</keyword>
<keyword id="KW-0963">Cytoplasm</keyword>
<keyword id="KW-0408">Iron</keyword>
<keyword id="KW-0411">Iron-sulfur</keyword>
<keyword id="KW-0479">Metal-binding</keyword>
<keyword id="KW-0663">Pyridoxal phosphate</keyword>
<keyword id="KW-0808">Transferase</keyword>
<dbReference type="EC" id="2.8.1.7" evidence="1"/>
<dbReference type="EMBL" id="CP001157">
    <property type="protein sequence ID" value="ACO80176.1"/>
    <property type="molecule type" value="Genomic_DNA"/>
</dbReference>
<dbReference type="RefSeq" id="WP_012702551.1">
    <property type="nucleotide sequence ID" value="NC_012560.1"/>
</dbReference>
<dbReference type="SMR" id="C1DE68"/>
<dbReference type="STRING" id="322710.Avin_40400"/>
<dbReference type="EnsemblBacteria" id="ACO80176">
    <property type="protein sequence ID" value="ACO80176"/>
    <property type="gene ID" value="Avin_40400"/>
</dbReference>
<dbReference type="GeneID" id="88186983"/>
<dbReference type="KEGG" id="avn:Avin_40400"/>
<dbReference type="eggNOG" id="COG1104">
    <property type="taxonomic scope" value="Bacteria"/>
</dbReference>
<dbReference type="HOGENOM" id="CLU_003433_0_2_6"/>
<dbReference type="OrthoDB" id="9808002at2"/>
<dbReference type="UniPathway" id="UPA00266"/>
<dbReference type="Proteomes" id="UP000002424">
    <property type="component" value="Chromosome"/>
</dbReference>
<dbReference type="GO" id="GO:1990221">
    <property type="term" value="C:L-cysteine desulfurase complex"/>
    <property type="evidence" value="ECO:0007669"/>
    <property type="project" value="UniProtKB-ARBA"/>
</dbReference>
<dbReference type="GO" id="GO:0051537">
    <property type="term" value="F:2 iron, 2 sulfur cluster binding"/>
    <property type="evidence" value="ECO:0007669"/>
    <property type="project" value="UniProtKB-UniRule"/>
</dbReference>
<dbReference type="GO" id="GO:0031071">
    <property type="term" value="F:cysteine desulfurase activity"/>
    <property type="evidence" value="ECO:0007669"/>
    <property type="project" value="UniProtKB-UniRule"/>
</dbReference>
<dbReference type="GO" id="GO:0046872">
    <property type="term" value="F:metal ion binding"/>
    <property type="evidence" value="ECO:0007669"/>
    <property type="project" value="UniProtKB-KW"/>
</dbReference>
<dbReference type="GO" id="GO:0030170">
    <property type="term" value="F:pyridoxal phosphate binding"/>
    <property type="evidence" value="ECO:0007669"/>
    <property type="project" value="UniProtKB-UniRule"/>
</dbReference>
<dbReference type="GO" id="GO:0044571">
    <property type="term" value="P:[2Fe-2S] cluster assembly"/>
    <property type="evidence" value="ECO:0007669"/>
    <property type="project" value="UniProtKB-UniRule"/>
</dbReference>
<dbReference type="FunFam" id="3.40.640.10:FF:000003">
    <property type="entry name" value="Cysteine desulfurase IscS"/>
    <property type="match status" value="1"/>
</dbReference>
<dbReference type="FunFam" id="3.90.1150.10:FF:000002">
    <property type="entry name" value="Cysteine desulfurase IscS"/>
    <property type="match status" value="1"/>
</dbReference>
<dbReference type="Gene3D" id="3.90.1150.10">
    <property type="entry name" value="Aspartate Aminotransferase, domain 1"/>
    <property type="match status" value="1"/>
</dbReference>
<dbReference type="Gene3D" id="3.40.640.10">
    <property type="entry name" value="Type I PLP-dependent aspartate aminotransferase-like (Major domain)"/>
    <property type="match status" value="1"/>
</dbReference>
<dbReference type="HAMAP" id="MF_00331">
    <property type="entry name" value="Cys_desulf_IscS"/>
    <property type="match status" value="1"/>
</dbReference>
<dbReference type="InterPro" id="IPR000192">
    <property type="entry name" value="Aminotrans_V_dom"/>
</dbReference>
<dbReference type="InterPro" id="IPR020578">
    <property type="entry name" value="Aminotrans_V_PyrdxlP_BS"/>
</dbReference>
<dbReference type="InterPro" id="IPR010240">
    <property type="entry name" value="Cys_deSase_IscS"/>
</dbReference>
<dbReference type="InterPro" id="IPR016454">
    <property type="entry name" value="Cysteine_dSase"/>
</dbReference>
<dbReference type="InterPro" id="IPR015424">
    <property type="entry name" value="PyrdxlP-dep_Trfase"/>
</dbReference>
<dbReference type="InterPro" id="IPR015421">
    <property type="entry name" value="PyrdxlP-dep_Trfase_major"/>
</dbReference>
<dbReference type="InterPro" id="IPR015422">
    <property type="entry name" value="PyrdxlP-dep_Trfase_small"/>
</dbReference>
<dbReference type="NCBIfam" id="TIGR02006">
    <property type="entry name" value="IscS"/>
    <property type="match status" value="1"/>
</dbReference>
<dbReference type="NCBIfam" id="NF010611">
    <property type="entry name" value="PRK14012.1"/>
    <property type="match status" value="1"/>
</dbReference>
<dbReference type="PANTHER" id="PTHR11601:SF34">
    <property type="entry name" value="CYSTEINE DESULFURASE"/>
    <property type="match status" value="1"/>
</dbReference>
<dbReference type="PANTHER" id="PTHR11601">
    <property type="entry name" value="CYSTEINE DESULFURYLASE FAMILY MEMBER"/>
    <property type="match status" value="1"/>
</dbReference>
<dbReference type="Pfam" id="PF00266">
    <property type="entry name" value="Aminotran_5"/>
    <property type="match status" value="1"/>
</dbReference>
<dbReference type="PIRSF" id="PIRSF005572">
    <property type="entry name" value="NifS"/>
    <property type="match status" value="1"/>
</dbReference>
<dbReference type="SUPFAM" id="SSF53383">
    <property type="entry name" value="PLP-dependent transferases"/>
    <property type="match status" value="1"/>
</dbReference>
<dbReference type="PROSITE" id="PS00595">
    <property type="entry name" value="AA_TRANSFER_CLASS_5"/>
    <property type="match status" value="1"/>
</dbReference>
<reference key="1">
    <citation type="journal article" date="2009" name="J. Bacteriol.">
        <title>Genome sequence of Azotobacter vinelandii, an obligate aerobe specialized to support diverse anaerobic metabolic processes.</title>
        <authorList>
            <person name="Setubal J.C."/>
            <person name="Dos Santos P."/>
            <person name="Goldman B.S."/>
            <person name="Ertesvaag H."/>
            <person name="Espin G."/>
            <person name="Rubio L.M."/>
            <person name="Valla S."/>
            <person name="Almeida N.F."/>
            <person name="Balasubramanian D."/>
            <person name="Cromes L."/>
            <person name="Curatti L."/>
            <person name="Du Z."/>
            <person name="Godsy E."/>
            <person name="Goodner B."/>
            <person name="Hellner-Burris K."/>
            <person name="Hernandez J.A."/>
            <person name="Houmiel K."/>
            <person name="Imperial J."/>
            <person name="Kennedy C."/>
            <person name="Larson T.J."/>
            <person name="Latreille P."/>
            <person name="Ligon L.S."/>
            <person name="Lu J."/>
            <person name="Maerk M."/>
            <person name="Miller N.M."/>
            <person name="Norton S."/>
            <person name="O'Carroll I.P."/>
            <person name="Paulsen I."/>
            <person name="Raulfs E.C."/>
            <person name="Roemer R."/>
            <person name="Rosser J."/>
            <person name="Segura D."/>
            <person name="Slater S."/>
            <person name="Stricklin S.L."/>
            <person name="Studholme D.J."/>
            <person name="Sun J."/>
            <person name="Viana C.J."/>
            <person name="Wallin E."/>
            <person name="Wang B."/>
            <person name="Wheeler C."/>
            <person name="Zhu H."/>
            <person name="Dean D.R."/>
            <person name="Dixon R."/>
            <person name="Wood D."/>
        </authorList>
    </citation>
    <scope>NUCLEOTIDE SEQUENCE [LARGE SCALE GENOMIC DNA]</scope>
    <source>
        <strain>DJ / ATCC BAA-1303</strain>
    </source>
</reference>
<evidence type="ECO:0000255" key="1">
    <source>
        <dbReference type="HAMAP-Rule" id="MF_00331"/>
    </source>
</evidence>